<accession>B2JJL1</accession>
<proteinExistence type="inferred from homology"/>
<organism>
    <name type="scientific">Paraburkholderia phymatum (strain DSM 17167 / CIP 108236 / LMG 21445 / STM815)</name>
    <name type="common">Burkholderia phymatum</name>
    <dbReference type="NCBI Taxonomy" id="391038"/>
    <lineage>
        <taxon>Bacteria</taxon>
        <taxon>Pseudomonadati</taxon>
        <taxon>Pseudomonadota</taxon>
        <taxon>Betaproteobacteria</taxon>
        <taxon>Burkholderiales</taxon>
        <taxon>Burkholderiaceae</taxon>
        <taxon>Paraburkholderia</taxon>
    </lineage>
</organism>
<keyword id="KW-0963">Cytoplasm</keyword>
<keyword id="KW-0274">FAD</keyword>
<keyword id="KW-0285">Flavoprotein</keyword>
<keyword id="KW-0520">NAD</keyword>
<keyword id="KW-1185">Reference proteome</keyword>
<keyword id="KW-0819">tRNA processing</keyword>
<gene>
    <name evidence="1" type="primary">mnmG</name>
    <name evidence="1" type="synonym">gidA</name>
    <name type="ordered locus">Bphy_3039</name>
</gene>
<name>MNMG_PARP8</name>
<sequence length="652" mass="71538">MLYPTEFDVIVVGGGHAGTEAALASARMGNKTLLLTHNIETLGQMSCNPSIGGIGKGHLVKEVDALGGAMAAATDEGGIQFRILNSSKGPAVRATRAQADRILYKAAIRHRLENQPNLWLFQQSVDDLMVEGDRVVGAVTQVGVRFRSRAVVLTAGTFLDGKIHVGLNNYTGGRAGDPAAVSLSARLKELKLPQGRLKTGTPPRIDGRTIDFSKLEEQPGDLDPIPVFSFLGRVEQHPRQVPCWVTHTNAQTHDIIRSGLDRSPMYTGVIEGVGPRYCPSIEDKIHRFASKESHQIFLEPEGLTTNEFYPNGISTSLPFDVQLELVRSMVGLEHAHILRPGYAIEYDYFDPRGLKASLETKAISGLFFAGQINGTTGYEEAAAQGLLAGINAGLYVQSKGPWCPRRDQAYLGVLVDDLVTRGVSEPYRMFTSRAEYRLSLREDNADMRLTEIGRELGVVDDVRWDAFSRKRDAVSRETERLRTTWVNPKTLSSEEATALLGKPIDHEYSLADLLRRPGVSYDGICGLREGTCGPDEALAHDDVLLAQIKEQIEIGVKYQGYIERQAGEIERNEAHENTRLPENLDYTEVRGLSFEARQKLTQFRPETIGQASRISGITPAAISLLMVHLKRGLGRRAPRPAGAGNDNSPVAQ</sequence>
<feature type="chain" id="PRO_1000095646" description="tRNA uridine 5-carboxymethylaminomethyl modification enzyme MnmG">
    <location>
        <begin position="1"/>
        <end position="652"/>
    </location>
</feature>
<feature type="binding site" evidence="1">
    <location>
        <begin position="13"/>
        <end position="18"/>
    </location>
    <ligand>
        <name>FAD</name>
        <dbReference type="ChEBI" id="CHEBI:57692"/>
    </ligand>
</feature>
<feature type="binding site" evidence="1">
    <location>
        <begin position="274"/>
        <end position="288"/>
    </location>
    <ligand>
        <name>NAD(+)</name>
        <dbReference type="ChEBI" id="CHEBI:57540"/>
    </ligand>
</feature>
<comment type="function">
    <text evidence="1">NAD-binding protein involved in the addition of a carboxymethylaminomethyl (cmnm) group at the wobble position (U34) of certain tRNAs, forming tRNA-cmnm(5)s(2)U34.</text>
</comment>
<comment type="cofactor">
    <cofactor evidence="1">
        <name>FAD</name>
        <dbReference type="ChEBI" id="CHEBI:57692"/>
    </cofactor>
</comment>
<comment type="subunit">
    <text evidence="1">Homodimer. Heterotetramer of two MnmE and two MnmG subunits.</text>
</comment>
<comment type="subcellular location">
    <subcellularLocation>
        <location evidence="1">Cytoplasm</location>
    </subcellularLocation>
</comment>
<comment type="similarity">
    <text evidence="1">Belongs to the MnmG family.</text>
</comment>
<dbReference type="EMBL" id="CP001043">
    <property type="protein sequence ID" value="ACC72209.1"/>
    <property type="molecule type" value="Genomic_DNA"/>
</dbReference>
<dbReference type="RefSeq" id="WP_012402386.1">
    <property type="nucleotide sequence ID" value="NC_010622.1"/>
</dbReference>
<dbReference type="SMR" id="B2JJL1"/>
<dbReference type="STRING" id="391038.Bphy_3039"/>
<dbReference type="KEGG" id="bph:Bphy_3039"/>
<dbReference type="eggNOG" id="COG0445">
    <property type="taxonomic scope" value="Bacteria"/>
</dbReference>
<dbReference type="HOGENOM" id="CLU_007831_2_2_4"/>
<dbReference type="OrthoDB" id="9815560at2"/>
<dbReference type="Proteomes" id="UP000001192">
    <property type="component" value="Chromosome 1"/>
</dbReference>
<dbReference type="GO" id="GO:0005829">
    <property type="term" value="C:cytosol"/>
    <property type="evidence" value="ECO:0007669"/>
    <property type="project" value="TreeGrafter"/>
</dbReference>
<dbReference type="GO" id="GO:0050660">
    <property type="term" value="F:flavin adenine dinucleotide binding"/>
    <property type="evidence" value="ECO:0007669"/>
    <property type="project" value="UniProtKB-UniRule"/>
</dbReference>
<dbReference type="GO" id="GO:0030488">
    <property type="term" value="P:tRNA methylation"/>
    <property type="evidence" value="ECO:0007669"/>
    <property type="project" value="TreeGrafter"/>
</dbReference>
<dbReference type="GO" id="GO:0002098">
    <property type="term" value="P:tRNA wobble uridine modification"/>
    <property type="evidence" value="ECO:0007669"/>
    <property type="project" value="InterPro"/>
</dbReference>
<dbReference type="FunFam" id="1.10.10.1800:FF:000001">
    <property type="entry name" value="tRNA uridine 5-carboxymethylaminomethyl modification enzyme MnmG"/>
    <property type="match status" value="1"/>
</dbReference>
<dbReference type="FunFam" id="1.10.150.570:FF:000001">
    <property type="entry name" value="tRNA uridine 5-carboxymethylaminomethyl modification enzyme MnmG"/>
    <property type="match status" value="1"/>
</dbReference>
<dbReference type="FunFam" id="3.50.50.60:FF:000002">
    <property type="entry name" value="tRNA uridine 5-carboxymethylaminomethyl modification enzyme MnmG"/>
    <property type="match status" value="1"/>
</dbReference>
<dbReference type="FunFam" id="3.50.50.60:FF:000010">
    <property type="entry name" value="tRNA uridine 5-carboxymethylaminomethyl modification enzyme MnmG"/>
    <property type="match status" value="1"/>
</dbReference>
<dbReference type="Gene3D" id="3.50.50.60">
    <property type="entry name" value="FAD/NAD(P)-binding domain"/>
    <property type="match status" value="2"/>
</dbReference>
<dbReference type="Gene3D" id="1.10.150.570">
    <property type="entry name" value="GidA associated domain, C-terminal subdomain"/>
    <property type="match status" value="1"/>
</dbReference>
<dbReference type="Gene3D" id="1.10.10.1800">
    <property type="entry name" value="tRNA uridine 5-carboxymethylaminomethyl modification enzyme MnmG/GidA"/>
    <property type="match status" value="1"/>
</dbReference>
<dbReference type="HAMAP" id="MF_00129">
    <property type="entry name" value="MnmG_GidA"/>
    <property type="match status" value="1"/>
</dbReference>
<dbReference type="InterPro" id="IPR036188">
    <property type="entry name" value="FAD/NAD-bd_sf"/>
</dbReference>
<dbReference type="InterPro" id="IPR049312">
    <property type="entry name" value="GIDA_C_N"/>
</dbReference>
<dbReference type="InterPro" id="IPR004416">
    <property type="entry name" value="MnmG"/>
</dbReference>
<dbReference type="InterPro" id="IPR002218">
    <property type="entry name" value="MnmG-rel"/>
</dbReference>
<dbReference type="InterPro" id="IPR020595">
    <property type="entry name" value="MnmG-rel_CS"/>
</dbReference>
<dbReference type="InterPro" id="IPR026904">
    <property type="entry name" value="MnmG_C"/>
</dbReference>
<dbReference type="InterPro" id="IPR047001">
    <property type="entry name" value="MnmG_C_subdom"/>
</dbReference>
<dbReference type="InterPro" id="IPR044920">
    <property type="entry name" value="MnmG_C_subdom_sf"/>
</dbReference>
<dbReference type="InterPro" id="IPR040131">
    <property type="entry name" value="MnmG_N"/>
</dbReference>
<dbReference type="NCBIfam" id="TIGR00136">
    <property type="entry name" value="mnmG_gidA"/>
    <property type="match status" value="1"/>
</dbReference>
<dbReference type="PANTHER" id="PTHR11806">
    <property type="entry name" value="GLUCOSE INHIBITED DIVISION PROTEIN A"/>
    <property type="match status" value="1"/>
</dbReference>
<dbReference type="PANTHER" id="PTHR11806:SF0">
    <property type="entry name" value="PROTEIN MTO1 HOMOLOG, MITOCHONDRIAL"/>
    <property type="match status" value="1"/>
</dbReference>
<dbReference type="Pfam" id="PF01134">
    <property type="entry name" value="GIDA"/>
    <property type="match status" value="1"/>
</dbReference>
<dbReference type="Pfam" id="PF21680">
    <property type="entry name" value="GIDA_C_1st"/>
    <property type="match status" value="1"/>
</dbReference>
<dbReference type="Pfam" id="PF13932">
    <property type="entry name" value="SAM_GIDA_C"/>
    <property type="match status" value="1"/>
</dbReference>
<dbReference type="SMART" id="SM01228">
    <property type="entry name" value="GIDA_assoc_3"/>
    <property type="match status" value="1"/>
</dbReference>
<dbReference type="SUPFAM" id="SSF51905">
    <property type="entry name" value="FAD/NAD(P)-binding domain"/>
    <property type="match status" value="1"/>
</dbReference>
<dbReference type="PROSITE" id="PS01280">
    <property type="entry name" value="GIDA_1"/>
    <property type="match status" value="1"/>
</dbReference>
<dbReference type="PROSITE" id="PS01281">
    <property type="entry name" value="GIDA_2"/>
    <property type="match status" value="1"/>
</dbReference>
<evidence type="ECO:0000255" key="1">
    <source>
        <dbReference type="HAMAP-Rule" id="MF_00129"/>
    </source>
</evidence>
<reference key="1">
    <citation type="journal article" date="2014" name="Stand. Genomic Sci.">
        <title>Complete genome sequence of Burkholderia phymatum STM815(T), a broad host range and efficient nitrogen-fixing symbiont of Mimosa species.</title>
        <authorList>
            <person name="Moulin L."/>
            <person name="Klonowska A."/>
            <person name="Caroline B."/>
            <person name="Booth K."/>
            <person name="Vriezen J.A."/>
            <person name="Melkonian R."/>
            <person name="James E.K."/>
            <person name="Young J.P."/>
            <person name="Bena G."/>
            <person name="Hauser L."/>
            <person name="Land M."/>
            <person name="Kyrpides N."/>
            <person name="Bruce D."/>
            <person name="Chain P."/>
            <person name="Copeland A."/>
            <person name="Pitluck S."/>
            <person name="Woyke T."/>
            <person name="Lizotte-Waniewski M."/>
            <person name="Bristow J."/>
            <person name="Riley M."/>
        </authorList>
    </citation>
    <scope>NUCLEOTIDE SEQUENCE [LARGE SCALE GENOMIC DNA]</scope>
    <source>
        <strain>DSM 17167 / CIP 108236 / LMG 21445 / STM815</strain>
    </source>
</reference>
<protein>
    <recommendedName>
        <fullName evidence="1">tRNA uridine 5-carboxymethylaminomethyl modification enzyme MnmG</fullName>
    </recommendedName>
    <alternativeName>
        <fullName evidence="1">Glucose-inhibited division protein A</fullName>
    </alternativeName>
</protein>